<protein>
    <recommendedName>
        <fullName>Uncharacterized protein PM1780</fullName>
    </recommendedName>
</protein>
<keyword id="KW-1185">Reference proteome</keyword>
<organism>
    <name type="scientific">Pasteurella multocida (strain Pm70)</name>
    <dbReference type="NCBI Taxonomy" id="272843"/>
    <lineage>
        <taxon>Bacteria</taxon>
        <taxon>Pseudomonadati</taxon>
        <taxon>Pseudomonadota</taxon>
        <taxon>Gammaproteobacteria</taxon>
        <taxon>Pasteurellales</taxon>
        <taxon>Pasteurellaceae</taxon>
        <taxon>Pasteurella</taxon>
    </lineage>
</organism>
<gene>
    <name type="ordered locus">PM1780</name>
</gene>
<accession>Q9CK54</accession>
<name>Y1780_PASMU</name>
<reference key="1">
    <citation type="journal article" date="2001" name="Proc. Natl. Acad. Sci. U.S.A.">
        <title>Complete genomic sequence of Pasteurella multocida Pm70.</title>
        <authorList>
            <person name="May B.J."/>
            <person name="Zhang Q."/>
            <person name="Li L.L."/>
            <person name="Paustian M.L."/>
            <person name="Whittam T.S."/>
            <person name="Kapur V."/>
        </authorList>
    </citation>
    <scope>NUCLEOTIDE SEQUENCE [LARGE SCALE GENOMIC DNA]</scope>
    <source>
        <strain>Pm70</strain>
    </source>
</reference>
<proteinExistence type="predicted"/>
<dbReference type="EMBL" id="AE004439">
    <property type="protein sequence ID" value="AAK03864.1"/>
    <property type="molecule type" value="Genomic_DNA"/>
</dbReference>
<dbReference type="RefSeq" id="WP_010907333.1">
    <property type="nucleotide sequence ID" value="NC_002663.1"/>
</dbReference>
<dbReference type="STRING" id="272843.PM1780"/>
<dbReference type="EnsemblBacteria" id="AAK03864">
    <property type="protein sequence ID" value="AAK03864"/>
    <property type="gene ID" value="PM1780"/>
</dbReference>
<dbReference type="KEGG" id="pmu:PM1780"/>
<dbReference type="PATRIC" id="fig|272843.6.peg.1803"/>
<dbReference type="HOGENOM" id="CLU_2194439_0_0_6"/>
<dbReference type="OrthoDB" id="5681087at2"/>
<dbReference type="Proteomes" id="UP000000809">
    <property type="component" value="Chromosome"/>
</dbReference>
<sequence>MRKYSVITYREDETVEGQPFIIATGKTYQAAAQIAREAMDNDPLVYGSTLRVERSPYEITVFDKQGEIAFVGEYPTYAQACDVSDYLKTTGLYSEIRISHPDGLGGEQ</sequence>
<feature type="chain" id="PRO_0000216334" description="Uncharacterized protein PM1780">
    <location>
        <begin position="1"/>
        <end position="108"/>
    </location>
</feature>